<organism>
    <name type="scientific">Mannheimia succiniciproducens (strain KCTC 0769BP / MBEL55E)</name>
    <dbReference type="NCBI Taxonomy" id="221988"/>
    <lineage>
        <taxon>Bacteria</taxon>
        <taxon>Pseudomonadati</taxon>
        <taxon>Pseudomonadota</taxon>
        <taxon>Gammaproteobacteria</taxon>
        <taxon>Pasteurellales</taxon>
        <taxon>Pasteurellaceae</taxon>
        <taxon>Basfia</taxon>
    </lineage>
</organism>
<keyword id="KW-0963">Cytoplasm</keyword>
<keyword id="KW-0238">DNA-binding</keyword>
<evidence type="ECO:0000255" key="1">
    <source>
        <dbReference type="HAMAP-Rule" id="MF_00274"/>
    </source>
</evidence>
<evidence type="ECO:0000256" key="2">
    <source>
        <dbReference type="SAM" id="MobiDB-lite"/>
    </source>
</evidence>
<dbReference type="EMBL" id="AE016827">
    <property type="protein sequence ID" value="AAU38114.1"/>
    <property type="molecule type" value="Genomic_DNA"/>
</dbReference>
<dbReference type="RefSeq" id="WP_011200680.1">
    <property type="nucleotide sequence ID" value="NC_006300.1"/>
</dbReference>
<dbReference type="SMR" id="Q65SE6"/>
<dbReference type="STRING" id="221988.MS1507"/>
<dbReference type="KEGG" id="msu:MS1507"/>
<dbReference type="eggNOG" id="COG0718">
    <property type="taxonomic scope" value="Bacteria"/>
</dbReference>
<dbReference type="HOGENOM" id="CLU_140930_0_0_6"/>
<dbReference type="OrthoDB" id="9808738at2"/>
<dbReference type="Proteomes" id="UP000000607">
    <property type="component" value="Chromosome"/>
</dbReference>
<dbReference type="GO" id="GO:0043590">
    <property type="term" value="C:bacterial nucleoid"/>
    <property type="evidence" value="ECO:0007669"/>
    <property type="project" value="UniProtKB-UniRule"/>
</dbReference>
<dbReference type="GO" id="GO:0005829">
    <property type="term" value="C:cytosol"/>
    <property type="evidence" value="ECO:0007669"/>
    <property type="project" value="TreeGrafter"/>
</dbReference>
<dbReference type="GO" id="GO:0003677">
    <property type="term" value="F:DNA binding"/>
    <property type="evidence" value="ECO:0007669"/>
    <property type="project" value="UniProtKB-UniRule"/>
</dbReference>
<dbReference type="FunFam" id="3.30.1310.10:FF:000001">
    <property type="entry name" value="Nucleoid-associated protein YbaB"/>
    <property type="match status" value="1"/>
</dbReference>
<dbReference type="Gene3D" id="3.30.1310.10">
    <property type="entry name" value="Nucleoid-associated protein YbaB-like domain"/>
    <property type="match status" value="1"/>
</dbReference>
<dbReference type="HAMAP" id="MF_00274">
    <property type="entry name" value="DNA_YbaB_EbfC"/>
    <property type="match status" value="1"/>
</dbReference>
<dbReference type="InterPro" id="IPR036894">
    <property type="entry name" value="YbaB-like_sf"/>
</dbReference>
<dbReference type="InterPro" id="IPR004401">
    <property type="entry name" value="YbaB/EbfC"/>
</dbReference>
<dbReference type="NCBIfam" id="TIGR00103">
    <property type="entry name" value="DNA_YbaB_EbfC"/>
    <property type="match status" value="1"/>
</dbReference>
<dbReference type="PANTHER" id="PTHR33449">
    <property type="entry name" value="NUCLEOID-ASSOCIATED PROTEIN YBAB"/>
    <property type="match status" value="1"/>
</dbReference>
<dbReference type="PANTHER" id="PTHR33449:SF1">
    <property type="entry name" value="NUCLEOID-ASSOCIATED PROTEIN YBAB"/>
    <property type="match status" value="1"/>
</dbReference>
<dbReference type="Pfam" id="PF02575">
    <property type="entry name" value="YbaB_DNA_bd"/>
    <property type="match status" value="1"/>
</dbReference>
<dbReference type="PIRSF" id="PIRSF004555">
    <property type="entry name" value="UCP004555"/>
    <property type="match status" value="1"/>
</dbReference>
<dbReference type="SUPFAM" id="SSF82607">
    <property type="entry name" value="YbaB-like"/>
    <property type="match status" value="1"/>
</dbReference>
<comment type="function">
    <text evidence="1">Binds to DNA and alters its conformation. May be involved in regulation of gene expression, nucleoid organization and DNA protection.</text>
</comment>
<comment type="subunit">
    <text evidence="1">Homodimer.</text>
</comment>
<comment type="subcellular location">
    <subcellularLocation>
        <location evidence="1">Cytoplasm</location>
        <location evidence="1">Nucleoid</location>
    </subcellularLocation>
</comment>
<comment type="similarity">
    <text evidence="1">Belongs to the YbaB/EbfC family.</text>
</comment>
<accession>Q65SE6</accession>
<name>Y1507_MANSM</name>
<gene>
    <name type="ordered locus">MS1507</name>
</gene>
<sequence>MFGKGGLGNLMKQAQQMQERMQKMQEEIAQLEVTGESGAGLVKVTINGAHNCRRVEIDPSLMEDDKDMLEDLIAAAFNDAARRADELQKEKMASVTAGMPIPPGFKMPF</sequence>
<proteinExistence type="inferred from homology"/>
<protein>
    <recommendedName>
        <fullName evidence="1">Nucleoid-associated protein MS1507</fullName>
    </recommendedName>
</protein>
<feature type="chain" id="PRO_1000003768" description="Nucleoid-associated protein MS1507">
    <location>
        <begin position="1"/>
        <end position="109"/>
    </location>
</feature>
<feature type="region of interest" description="Disordered" evidence="2">
    <location>
        <begin position="1"/>
        <end position="21"/>
    </location>
</feature>
<reference key="1">
    <citation type="journal article" date="2004" name="Nat. Biotechnol.">
        <title>The genome sequence of the capnophilic rumen bacterium Mannheimia succiniciproducens.</title>
        <authorList>
            <person name="Hong S.H."/>
            <person name="Kim J.S."/>
            <person name="Lee S.Y."/>
            <person name="In Y.H."/>
            <person name="Choi S.S."/>
            <person name="Rih J.-K."/>
            <person name="Kim C.H."/>
            <person name="Jeong H."/>
            <person name="Hur C.G."/>
            <person name="Kim J.J."/>
        </authorList>
    </citation>
    <scope>NUCLEOTIDE SEQUENCE [LARGE SCALE GENOMIC DNA]</scope>
    <source>
        <strain>KCTC 0769BP / MBEL55E</strain>
    </source>
</reference>